<organism>
    <name type="scientific">Schizosaccharomyces pombe (strain 972 / ATCC 24843)</name>
    <name type="common">Fission yeast</name>
    <dbReference type="NCBI Taxonomy" id="284812"/>
    <lineage>
        <taxon>Eukaryota</taxon>
        <taxon>Fungi</taxon>
        <taxon>Dikarya</taxon>
        <taxon>Ascomycota</taxon>
        <taxon>Taphrinomycotina</taxon>
        <taxon>Schizosaccharomycetes</taxon>
        <taxon>Schizosaccharomycetales</taxon>
        <taxon>Schizosaccharomycetaceae</taxon>
        <taxon>Schizosaccharomyces</taxon>
    </lineage>
</organism>
<keyword id="KW-0386">Hypusine biosynthesis</keyword>
<keyword id="KW-0520">NAD</keyword>
<keyword id="KW-1185">Reference proteome</keyword>
<keyword id="KW-0808">Transferase</keyword>
<evidence type="ECO:0000250" key="1"/>
<evidence type="ECO:0000305" key="2"/>
<feature type="chain" id="PRO_0000134486" description="Probable deoxyhypusine synthase">
    <location>
        <begin position="1"/>
        <end position="350"/>
    </location>
</feature>
<feature type="active site" description="Nucleophile" evidence="1">
    <location>
        <position position="322"/>
    </location>
</feature>
<feature type="binding site" evidence="1">
    <location>
        <begin position="96"/>
        <end position="100"/>
    </location>
    <ligand>
        <name>NAD(+)</name>
        <dbReference type="ChEBI" id="CHEBI:57540"/>
    </ligand>
</feature>
<feature type="binding site" evidence="1">
    <location>
        <begin position="122"/>
        <end position="124"/>
    </location>
    <ligand>
        <name>NAD(+)</name>
        <dbReference type="ChEBI" id="CHEBI:57540"/>
    </ligand>
</feature>
<feature type="binding site" evidence="1">
    <location>
        <begin position="127"/>
        <end position="128"/>
    </location>
    <ligand>
        <name>spermidine</name>
        <dbReference type="ChEBI" id="CHEBI:57834"/>
    </ligand>
</feature>
<feature type="binding site" evidence="1">
    <location>
        <position position="128"/>
    </location>
    <ligand>
        <name>NAD(+)</name>
        <dbReference type="ChEBI" id="CHEBI:57540"/>
    </ligand>
</feature>
<feature type="binding site" evidence="1">
    <location>
        <position position="229"/>
    </location>
    <ligand>
        <name>NAD(+)</name>
        <dbReference type="ChEBI" id="CHEBI:57540"/>
    </ligand>
</feature>
<feature type="binding site" evidence="1">
    <location>
        <position position="234"/>
    </location>
    <ligand>
        <name>spermidine</name>
        <dbReference type="ChEBI" id="CHEBI:57834"/>
    </ligand>
</feature>
<feature type="binding site" evidence="1">
    <location>
        <position position="276"/>
    </location>
    <ligand>
        <name>NAD(+)</name>
        <dbReference type="ChEBI" id="CHEBI:57540"/>
    </ligand>
</feature>
<feature type="binding site" evidence="1">
    <location>
        <position position="281"/>
    </location>
    <ligand>
        <name>spermidine</name>
        <dbReference type="ChEBI" id="CHEBI:57834"/>
    </ligand>
</feature>
<feature type="binding site" evidence="1">
    <location>
        <begin position="301"/>
        <end position="302"/>
    </location>
    <ligand>
        <name>NAD(+)</name>
        <dbReference type="ChEBI" id="CHEBI:57540"/>
    </ligand>
</feature>
<feature type="binding site" evidence="1">
    <location>
        <begin position="307"/>
        <end position="309"/>
    </location>
    <ligand>
        <name>spermidine</name>
        <dbReference type="ChEBI" id="CHEBI:57834"/>
    </ligand>
</feature>
<feature type="binding site" evidence="1">
    <location>
        <begin position="316"/>
        <end position="322"/>
    </location>
    <ligand>
        <name>spermidine</name>
        <dbReference type="ChEBI" id="CHEBI:57834"/>
    </ligand>
</feature>
<feature type="binding site" evidence="1">
    <location>
        <begin position="335"/>
        <end position="336"/>
    </location>
    <ligand>
        <name>NAD(+)</name>
        <dbReference type="ChEBI" id="CHEBI:57540"/>
    </ligand>
</feature>
<accession>O94337</accession>
<reference key="1">
    <citation type="journal article" date="2002" name="Nature">
        <title>The genome sequence of Schizosaccharomyces pombe.</title>
        <authorList>
            <person name="Wood V."/>
            <person name="Gwilliam R."/>
            <person name="Rajandream M.A."/>
            <person name="Lyne M.H."/>
            <person name="Lyne R."/>
            <person name="Stewart A."/>
            <person name="Sgouros J.G."/>
            <person name="Peat N."/>
            <person name="Hayles J."/>
            <person name="Baker S.G."/>
            <person name="Basham D."/>
            <person name="Bowman S."/>
            <person name="Brooks K."/>
            <person name="Brown D."/>
            <person name="Brown S."/>
            <person name="Chillingworth T."/>
            <person name="Churcher C.M."/>
            <person name="Collins M."/>
            <person name="Connor R."/>
            <person name="Cronin A."/>
            <person name="Davis P."/>
            <person name="Feltwell T."/>
            <person name="Fraser A."/>
            <person name="Gentles S."/>
            <person name="Goble A."/>
            <person name="Hamlin N."/>
            <person name="Harris D.E."/>
            <person name="Hidalgo J."/>
            <person name="Hodgson G."/>
            <person name="Holroyd S."/>
            <person name="Hornsby T."/>
            <person name="Howarth S."/>
            <person name="Huckle E.J."/>
            <person name="Hunt S."/>
            <person name="Jagels K."/>
            <person name="James K.D."/>
            <person name="Jones L."/>
            <person name="Jones M."/>
            <person name="Leather S."/>
            <person name="McDonald S."/>
            <person name="McLean J."/>
            <person name="Mooney P."/>
            <person name="Moule S."/>
            <person name="Mungall K.L."/>
            <person name="Murphy L.D."/>
            <person name="Niblett D."/>
            <person name="Odell C."/>
            <person name="Oliver K."/>
            <person name="O'Neil S."/>
            <person name="Pearson D."/>
            <person name="Quail M.A."/>
            <person name="Rabbinowitsch E."/>
            <person name="Rutherford K.M."/>
            <person name="Rutter S."/>
            <person name="Saunders D."/>
            <person name="Seeger K."/>
            <person name="Sharp S."/>
            <person name="Skelton J."/>
            <person name="Simmonds M.N."/>
            <person name="Squares R."/>
            <person name="Squares S."/>
            <person name="Stevens K."/>
            <person name="Taylor K."/>
            <person name="Taylor R.G."/>
            <person name="Tivey A."/>
            <person name="Walsh S.V."/>
            <person name="Warren T."/>
            <person name="Whitehead S."/>
            <person name="Woodward J.R."/>
            <person name="Volckaert G."/>
            <person name="Aert R."/>
            <person name="Robben J."/>
            <person name="Grymonprez B."/>
            <person name="Weltjens I."/>
            <person name="Vanstreels E."/>
            <person name="Rieger M."/>
            <person name="Schaefer M."/>
            <person name="Mueller-Auer S."/>
            <person name="Gabel C."/>
            <person name="Fuchs M."/>
            <person name="Duesterhoeft A."/>
            <person name="Fritzc C."/>
            <person name="Holzer E."/>
            <person name="Moestl D."/>
            <person name="Hilbert H."/>
            <person name="Borzym K."/>
            <person name="Langer I."/>
            <person name="Beck A."/>
            <person name="Lehrach H."/>
            <person name="Reinhardt R."/>
            <person name="Pohl T.M."/>
            <person name="Eger P."/>
            <person name="Zimmermann W."/>
            <person name="Wedler H."/>
            <person name="Wambutt R."/>
            <person name="Purnelle B."/>
            <person name="Goffeau A."/>
            <person name="Cadieu E."/>
            <person name="Dreano S."/>
            <person name="Gloux S."/>
            <person name="Lelaure V."/>
            <person name="Mottier S."/>
            <person name="Galibert F."/>
            <person name="Aves S.J."/>
            <person name="Xiang Z."/>
            <person name="Hunt C."/>
            <person name="Moore K."/>
            <person name="Hurst S.M."/>
            <person name="Lucas M."/>
            <person name="Rochet M."/>
            <person name="Gaillardin C."/>
            <person name="Tallada V.A."/>
            <person name="Garzon A."/>
            <person name="Thode G."/>
            <person name="Daga R.R."/>
            <person name="Cruzado L."/>
            <person name="Jimenez J."/>
            <person name="Sanchez M."/>
            <person name="del Rey F."/>
            <person name="Benito J."/>
            <person name="Dominguez A."/>
            <person name="Revuelta J.L."/>
            <person name="Moreno S."/>
            <person name="Armstrong J."/>
            <person name="Forsburg S.L."/>
            <person name="Cerutti L."/>
            <person name="Lowe T."/>
            <person name="McCombie W.R."/>
            <person name="Paulsen I."/>
            <person name="Potashkin J."/>
            <person name="Shpakovski G.V."/>
            <person name="Ussery D."/>
            <person name="Barrell B.G."/>
            <person name="Nurse P."/>
        </authorList>
    </citation>
    <scope>NUCLEOTIDE SEQUENCE [LARGE SCALE GENOMIC DNA]</scope>
    <source>
        <strain>972 / ATCC 24843</strain>
    </source>
</reference>
<protein>
    <recommendedName>
        <fullName>Probable deoxyhypusine synthase</fullName>
        <shortName>DHS</shortName>
        <ecNumber>2.5.1.46</ecNumber>
    </recommendedName>
</protein>
<dbReference type="EC" id="2.5.1.46"/>
<dbReference type="EMBL" id="CU329671">
    <property type="protein sequence ID" value="CAA22194.2"/>
    <property type="molecule type" value="Genomic_DNA"/>
</dbReference>
<dbReference type="PIR" id="T39340">
    <property type="entry name" value="T39340"/>
</dbReference>
<dbReference type="SMR" id="O94337"/>
<dbReference type="BioGRID" id="276381">
    <property type="interactions" value="9"/>
</dbReference>
<dbReference type="FunCoup" id="O94337">
    <property type="interactions" value="730"/>
</dbReference>
<dbReference type="STRING" id="284812.O94337"/>
<dbReference type="iPTMnet" id="O94337"/>
<dbReference type="PaxDb" id="4896-SPBC1271.04c.1"/>
<dbReference type="EnsemblFungi" id="SPBC1271.04c.1">
    <property type="protein sequence ID" value="SPBC1271.04c.1:pep"/>
    <property type="gene ID" value="SPBC1271.04c"/>
</dbReference>
<dbReference type="KEGG" id="spo:2539832"/>
<dbReference type="PomBase" id="SPBC1271.04c"/>
<dbReference type="VEuPathDB" id="FungiDB:SPBC1271.04c"/>
<dbReference type="eggNOG" id="KOG2924">
    <property type="taxonomic scope" value="Eukaryota"/>
</dbReference>
<dbReference type="HOGENOM" id="CLU_039781_0_0_1"/>
<dbReference type="InParanoid" id="O94337"/>
<dbReference type="OMA" id="HSIINAN"/>
<dbReference type="PhylomeDB" id="O94337"/>
<dbReference type="Reactome" id="R-SPO-204626">
    <property type="pathway name" value="Hypusine synthesis from eIF5A-lysine"/>
</dbReference>
<dbReference type="UniPathway" id="UPA00354"/>
<dbReference type="PRO" id="PR:O94337"/>
<dbReference type="Proteomes" id="UP000002485">
    <property type="component" value="Chromosome II"/>
</dbReference>
<dbReference type="GO" id="GO:0005737">
    <property type="term" value="C:cytoplasm"/>
    <property type="evidence" value="ECO:0000318"/>
    <property type="project" value="GO_Central"/>
</dbReference>
<dbReference type="GO" id="GO:0005829">
    <property type="term" value="C:cytosol"/>
    <property type="evidence" value="ECO:0007005"/>
    <property type="project" value="PomBase"/>
</dbReference>
<dbReference type="GO" id="GO:0005634">
    <property type="term" value="C:nucleus"/>
    <property type="evidence" value="ECO:0007005"/>
    <property type="project" value="PomBase"/>
</dbReference>
<dbReference type="GO" id="GO:0034038">
    <property type="term" value="F:deoxyhypusine synthase activity"/>
    <property type="evidence" value="ECO:0000318"/>
    <property type="project" value="GO_Central"/>
</dbReference>
<dbReference type="GO" id="GO:2000765">
    <property type="term" value="P:regulation of cytoplasmic translation"/>
    <property type="evidence" value="ECO:0000305"/>
    <property type="project" value="PomBase"/>
</dbReference>
<dbReference type="GO" id="GO:0008216">
    <property type="term" value="P:spermidine metabolic process"/>
    <property type="evidence" value="ECO:0000318"/>
    <property type="project" value="GO_Central"/>
</dbReference>
<dbReference type="FunFam" id="3.40.910.10:FF:000001">
    <property type="entry name" value="Probable deoxyhypusine synthase"/>
    <property type="match status" value="1"/>
</dbReference>
<dbReference type="Gene3D" id="3.40.910.10">
    <property type="entry name" value="Deoxyhypusine synthase"/>
    <property type="match status" value="1"/>
</dbReference>
<dbReference type="InterPro" id="IPR002773">
    <property type="entry name" value="Deoxyhypusine_synthase"/>
</dbReference>
<dbReference type="InterPro" id="IPR036982">
    <property type="entry name" value="Deoxyhypusine_synthase_sf"/>
</dbReference>
<dbReference type="InterPro" id="IPR029035">
    <property type="entry name" value="DHS-like_NAD/FAD-binding_dom"/>
</dbReference>
<dbReference type="NCBIfam" id="TIGR00321">
    <property type="entry name" value="dhys"/>
    <property type="match status" value="1"/>
</dbReference>
<dbReference type="PANTHER" id="PTHR11703">
    <property type="entry name" value="DEOXYHYPUSINE SYNTHASE"/>
    <property type="match status" value="1"/>
</dbReference>
<dbReference type="PANTHER" id="PTHR11703:SF0">
    <property type="entry name" value="DEOXYHYPUSINE SYNTHASE"/>
    <property type="match status" value="1"/>
</dbReference>
<dbReference type="Pfam" id="PF01916">
    <property type="entry name" value="DS"/>
    <property type="match status" value="1"/>
</dbReference>
<dbReference type="SUPFAM" id="SSF52467">
    <property type="entry name" value="DHS-like NAD/FAD-binding domain"/>
    <property type="match status" value="1"/>
</dbReference>
<sequence length="350" mass="38811">MDESLAKDAVFVASSKPSDLTTEVVGPDFNKYDERKKAGGPGITVEELVESYGKIGFQATNLHDAVTIINEMRNWRDPNPPEEKSDRATIFLGYTSNLISSGVREVLRYLVQHKCVDVIVTTAGGVEEDIIKCLGPTYVGDFHLDGKNLRAKGLNRIGNLIVPNDNYCRFEEWIFPILNKMVEEQETLGTHWTPSSFIRRLGKEINDESSVLYWAYKNNIPIYSPALTDGSIGDMLYFHTYKATPRPLVLDIVADIRNMNTHAVRANKSGIIILGGGVVKHHICNANLMRNGAEWSVYINSANEFDGSDAGARPDEAVSWGKIRGDAKKVKVYGEVSLLFPLIVAATFAK</sequence>
<name>DHYS_SCHPO</name>
<gene>
    <name type="ORF">SPBC1271.04c</name>
</gene>
<comment type="function">
    <text evidence="1">Catalyzes the NAD-dependent oxidative cleavage of spermidine and the subsequent transfer of the butylamine moiety of spermidine to the epsilon-amino group of a specific lysine residue of the eIF-5A precursor protein to form the intermediate deoxyhypusine residue.</text>
</comment>
<comment type="catalytic activity">
    <reaction>
        <text>[eIF5A protein]-L-lysine + spermidine = [eIF5A protein]-deoxyhypusine + propane-1,3-diamine</text>
        <dbReference type="Rhea" id="RHEA:33299"/>
        <dbReference type="Rhea" id="RHEA-COMP:10143"/>
        <dbReference type="Rhea" id="RHEA-COMP:10144"/>
        <dbReference type="ChEBI" id="CHEBI:29969"/>
        <dbReference type="ChEBI" id="CHEBI:57484"/>
        <dbReference type="ChEBI" id="CHEBI:57834"/>
        <dbReference type="ChEBI" id="CHEBI:82657"/>
        <dbReference type="EC" id="2.5.1.46"/>
    </reaction>
</comment>
<comment type="cofactor">
    <cofactor evidence="1">
        <name>NAD(+)</name>
        <dbReference type="ChEBI" id="CHEBI:57540"/>
    </cofactor>
</comment>
<comment type="pathway">
    <text>Protein modification; eIF5A hypusination.</text>
</comment>
<comment type="similarity">
    <text evidence="2">Belongs to the deoxyhypusine synthase family.</text>
</comment>
<proteinExistence type="inferred from homology"/>